<proteinExistence type="inferred from homology"/>
<gene>
    <name evidence="1" type="primary">tsf</name>
    <name type="ordered locus">Sbal_1451</name>
</gene>
<evidence type="ECO:0000255" key="1">
    <source>
        <dbReference type="HAMAP-Rule" id="MF_00050"/>
    </source>
</evidence>
<keyword id="KW-0963">Cytoplasm</keyword>
<keyword id="KW-0251">Elongation factor</keyword>
<keyword id="KW-0648">Protein biosynthesis</keyword>
<keyword id="KW-1185">Reference proteome</keyword>
<name>EFTS_SHEB5</name>
<organism>
    <name type="scientific">Shewanella baltica (strain OS155 / ATCC BAA-1091)</name>
    <dbReference type="NCBI Taxonomy" id="325240"/>
    <lineage>
        <taxon>Bacteria</taxon>
        <taxon>Pseudomonadati</taxon>
        <taxon>Pseudomonadota</taxon>
        <taxon>Gammaproteobacteria</taxon>
        <taxon>Alteromonadales</taxon>
        <taxon>Shewanellaceae</taxon>
        <taxon>Shewanella</taxon>
    </lineage>
</organism>
<dbReference type="EMBL" id="CP000563">
    <property type="protein sequence ID" value="ABN60969.1"/>
    <property type="molecule type" value="Genomic_DNA"/>
</dbReference>
<dbReference type="RefSeq" id="WP_006085247.1">
    <property type="nucleotide sequence ID" value="NC_009052.1"/>
</dbReference>
<dbReference type="SMR" id="A3D2K6"/>
<dbReference type="STRING" id="325240.Sbal_1451"/>
<dbReference type="GeneID" id="11771731"/>
<dbReference type="KEGG" id="sbl:Sbal_1451"/>
<dbReference type="HOGENOM" id="CLU_047155_0_2_6"/>
<dbReference type="OrthoDB" id="9808348at2"/>
<dbReference type="Proteomes" id="UP000001557">
    <property type="component" value="Chromosome"/>
</dbReference>
<dbReference type="GO" id="GO:0005737">
    <property type="term" value="C:cytoplasm"/>
    <property type="evidence" value="ECO:0007669"/>
    <property type="project" value="UniProtKB-SubCell"/>
</dbReference>
<dbReference type="GO" id="GO:0003746">
    <property type="term" value="F:translation elongation factor activity"/>
    <property type="evidence" value="ECO:0007669"/>
    <property type="project" value="UniProtKB-UniRule"/>
</dbReference>
<dbReference type="CDD" id="cd14275">
    <property type="entry name" value="UBA_EF-Ts"/>
    <property type="match status" value="1"/>
</dbReference>
<dbReference type="FunFam" id="1.10.286.20:FF:000001">
    <property type="entry name" value="Elongation factor Ts"/>
    <property type="match status" value="1"/>
</dbReference>
<dbReference type="FunFam" id="1.10.8.10:FF:000001">
    <property type="entry name" value="Elongation factor Ts"/>
    <property type="match status" value="1"/>
</dbReference>
<dbReference type="FunFam" id="3.30.479.20:FF:000001">
    <property type="entry name" value="Elongation factor Ts"/>
    <property type="match status" value="1"/>
</dbReference>
<dbReference type="Gene3D" id="1.10.286.20">
    <property type="match status" value="1"/>
</dbReference>
<dbReference type="Gene3D" id="1.10.8.10">
    <property type="entry name" value="DNA helicase RuvA subunit, C-terminal domain"/>
    <property type="match status" value="1"/>
</dbReference>
<dbReference type="Gene3D" id="3.30.479.20">
    <property type="entry name" value="Elongation factor Ts, dimerisation domain"/>
    <property type="match status" value="2"/>
</dbReference>
<dbReference type="HAMAP" id="MF_00050">
    <property type="entry name" value="EF_Ts"/>
    <property type="match status" value="1"/>
</dbReference>
<dbReference type="InterPro" id="IPR036402">
    <property type="entry name" value="EF-Ts_dimer_sf"/>
</dbReference>
<dbReference type="InterPro" id="IPR001816">
    <property type="entry name" value="Transl_elong_EFTs/EF1B"/>
</dbReference>
<dbReference type="InterPro" id="IPR014039">
    <property type="entry name" value="Transl_elong_EFTs/EF1B_dimer"/>
</dbReference>
<dbReference type="InterPro" id="IPR018101">
    <property type="entry name" value="Transl_elong_Ts_CS"/>
</dbReference>
<dbReference type="InterPro" id="IPR009060">
    <property type="entry name" value="UBA-like_sf"/>
</dbReference>
<dbReference type="NCBIfam" id="TIGR00116">
    <property type="entry name" value="tsf"/>
    <property type="match status" value="1"/>
</dbReference>
<dbReference type="PANTHER" id="PTHR11741">
    <property type="entry name" value="ELONGATION FACTOR TS"/>
    <property type="match status" value="1"/>
</dbReference>
<dbReference type="PANTHER" id="PTHR11741:SF0">
    <property type="entry name" value="ELONGATION FACTOR TS, MITOCHONDRIAL"/>
    <property type="match status" value="1"/>
</dbReference>
<dbReference type="Pfam" id="PF00889">
    <property type="entry name" value="EF_TS"/>
    <property type="match status" value="1"/>
</dbReference>
<dbReference type="SUPFAM" id="SSF54713">
    <property type="entry name" value="Elongation factor Ts (EF-Ts), dimerisation domain"/>
    <property type="match status" value="2"/>
</dbReference>
<dbReference type="SUPFAM" id="SSF46934">
    <property type="entry name" value="UBA-like"/>
    <property type="match status" value="1"/>
</dbReference>
<dbReference type="PROSITE" id="PS01126">
    <property type="entry name" value="EF_TS_1"/>
    <property type="match status" value="1"/>
</dbReference>
<dbReference type="PROSITE" id="PS01127">
    <property type="entry name" value="EF_TS_2"/>
    <property type="match status" value="1"/>
</dbReference>
<feature type="chain" id="PRO_1000006173" description="Elongation factor Ts">
    <location>
        <begin position="1"/>
        <end position="283"/>
    </location>
</feature>
<feature type="region of interest" description="Involved in Mg(2+) ion dislocation from EF-Tu" evidence="1">
    <location>
        <begin position="79"/>
        <end position="82"/>
    </location>
</feature>
<sequence>MAITAAQVKELRDRTGAGMMDCKNALTETNGDMELAIDNMRKSGAAKAAKKAGNIAADGTILIKNGEGFAALLEVNCQTDFVAKDSNFLAFANAVLDAAAASKVTLEDLKAQFEDARVALVTKIGENINIRRVEYIDGANLSSYRHGERIGVVVAGEADEETLKHIAMHVAASKPEYVNPEDVPAEIVAREQALQIEMSMNEGKSAEIAEKMVLGRMKKFTGEISLTGQAYIMEPKKTVGEILKEKGAKVTNFIRLEVGEGIEKKEEDFAAEVAAQIAASKKA</sequence>
<protein>
    <recommendedName>
        <fullName evidence="1">Elongation factor Ts</fullName>
        <shortName evidence="1">EF-Ts</shortName>
    </recommendedName>
</protein>
<comment type="function">
    <text evidence="1">Associates with the EF-Tu.GDP complex and induces the exchange of GDP to GTP. It remains bound to the aminoacyl-tRNA.EF-Tu.GTP complex up to the GTP hydrolysis stage on the ribosome.</text>
</comment>
<comment type="subcellular location">
    <subcellularLocation>
        <location evidence="1">Cytoplasm</location>
    </subcellularLocation>
</comment>
<comment type="similarity">
    <text evidence="1">Belongs to the EF-Ts family.</text>
</comment>
<reference key="1">
    <citation type="submission" date="2007-02" db="EMBL/GenBank/DDBJ databases">
        <title>Complete sequence of chromosome of Shewanella baltica OS155.</title>
        <authorList>
            <consortium name="US DOE Joint Genome Institute"/>
            <person name="Copeland A."/>
            <person name="Lucas S."/>
            <person name="Lapidus A."/>
            <person name="Barry K."/>
            <person name="Detter J.C."/>
            <person name="Glavina del Rio T."/>
            <person name="Hammon N."/>
            <person name="Israni S."/>
            <person name="Dalin E."/>
            <person name="Tice H."/>
            <person name="Pitluck S."/>
            <person name="Sims D.R."/>
            <person name="Brettin T."/>
            <person name="Bruce D."/>
            <person name="Han C."/>
            <person name="Tapia R."/>
            <person name="Brainard J."/>
            <person name="Schmutz J."/>
            <person name="Larimer F."/>
            <person name="Land M."/>
            <person name="Hauser L."/>
            <person name="Kyrpides N."/>
            <person name="Mikhailova N."/>
            <person name="Brettar I."/>
            <person name="Klappenbach J."/>
            <person name="Konstantinidis K."/>
            <person name="Rodrigues J."/>
            <person name="Tiedje J."/>
            <person name="Richardson P."/>
        </authorList>
    </citation>
    <scope>NUCLEOTIDE SEQUENCE [LARGE SCALE GENOMIC DNA]</scope>
    <source>
        <strain>OS155 / ATCC BAA-1091</strain>
    </source>
</reference>
<accession>A3D2K6</accession>